<accession>Q7YRG8</accession>
<keyword id="KW-1015">Disulfide bond</keyword>
<keyword id="KW-0325">Glycoprotein</keyword>
<keyword id="KW-0964">Secreted</keyword>
<keyword id="KW-0732">Signal</keyword>
<gene>
    <name type="primary">RNASE9</name>
</gene>
<reference key="1">
    <citation type="submission" date="2003-06" db="EMBL/GenBank/DDBJ databases">
        <title>LOC122650 on chromosome 14q11.2 is related to the RNase A superfamily and contains a unique amino-terminal pre-protein-like domain.</title>
        <authorList>
            <person name="Devor E.J."/>
            <person name="Moffat-Wilson K.A."/>
        </authorList>
    </citation>
    <scope>NUCLEOTIDE SEQUENCE [GENOMIC DNA]</scope>
</reference>
<protein>
    <recommendedName>
        <fullName>Inactive ribonuclease-like protein 9</fullName>
    </recommendedName>
</protein>
<evidence type="ECO:0000250" key="1"/>
<evidence type="ECO:0000255" key="2"/>
<evidence type="ECO:0000305" key="3"/>
<name>RNAS9_CEBAL</name>
<sequence>MMLITTHSLPLLLLLLQLWQPLQFQEAYYEDFYFPAYSDKEDFEDFMVEFQSTGPTRPPTKEKVKRRILVNPGMPLGDSGYCNYQIMRKNVYYKYSCVTEHYFLLMQYDELQKTCYNRFVPCKNGIRKCNMSKKLVEGVYCNLTKASNIPLCQYNSFYRRGYVLITCTWQNEMQKLIPYPINDLVEPPEHTKSFLNEDGVFVVPP</sequence>
<feature type="signal peptide" evidence="2">
    <location>
        <begin position="1"/>
        <end position="24"/>
    </location>
</feature>
<feature type="chain" id="PRO_0000030946" description="Inactive ribonuclease-like protein 9">
    <location>
        <begin position="25"/>
        <end position="205"/>
    </location>
</feature>
<feature type="glycosylation site" description="N-linked (GlcNAc...) asparagine" evidence="2">
    <location>
        <position position="130"/>
    </location>
</feature>
<feature type="glycosylation site" description="N-linked (GlcNAc...) asparagine" evidence="2">
    <location>
        <position position="142"/>
    </location>
</feature>
<feature type="disulfide bond" evidence="1">
    <location>
        <begin position="97"/>
        <end position="152"/>
    </location>
</feature>
<feature type="disulfide bond" evidence="1">
    <location>
        <begin position="115"/>
        <end position="167"/>
    </location>
</feature>
<feature type="disulfide bond" evidence="1">
    <location>
        <begin position="122"/>
        <end position="129"/>
    </location>
</feature>
<dbReference type="EMBL" id="AY330198">
    <property type="protein sequence ID" value="AAQ01508.1"/>
    <property type="molecule type" value="Genomic_DNA"/>
</dbReference>
<dbReference type="SMR" id="Q7YRG8"/>
<dbReference type="GlyCosmos" id="Q7YRG8">
    <property type="glycosylation" value="2 sites, No reported glycans"/>
</dbReference>
<dbReference type="GO" id="GO:0005576">
    <property type="term" value="C:extracellular region"/>
    <property type="evidence" value="ECO:0007669"/>
    <property type="project" value="UniProtKB-SubCell"/>
</dbReference>
<dbReference type="GO" id="GO:0003676">
    <property type="term" value="F:nucleic acid binding"/>
    <property type="evidence" value="ECO:0007669"/>
    <property type="project" value="InterPro"/>
</dbReference>
<dbReference type="GO" id="GO:0050830">
    <property type="term" value="P:defense response to Gram-positive bacterium"/>
    <property type="evidence" value="ECO:0007669"/>
    <property type="project" value="TreeGrafter"/>
</dbReference>
<dbReference type="CDD" id="cd00163">
    <property type="entry name" value="RNase_A"/>
    <property type="match status" value="1"/>
</dbReference>
<dbReference type="FunFam" id="3.10.130.10:FF:000003">
    <property type="entry name" value="Inactive ribonuclease-like protein 9"/>
    <property type="match status" value="1"/>
</dbReference>
<dbReference type="Gene3D" id="3.10.130.10">
    <property type="entry name" value="Ribonuclease A-like domain"/>
    <property type="match status" value="1"/>
</dbReference>
<dbReference type="InterPro" id="IPR001427">
    <property type="entry name" value="RNaseA"/>
</dbReference>
<dbReference type="InterPro" id="IPR036816">
    <property type="entry name" value="RNaseA-like_dom_sf"/>
</dbReference>
<dbReference type="InterPro" id="IPR023412">
    <property type="entry name" value="RNaseA_domain"/>
</dbReference>
<dbReference type="PANTHER" id="PTHR11437:SF14">
    <property type="entry name" value="INACTIVE RIBONUCLEASE-LIKE PROTEIN 9"/>
    <property type="match status" value="1"/>
</dbReference>
<dbReference type="PANTHER" id="PTHR11437">
    <property type="entry name" value="RIBONUCLEASE"/>
    <property type="match status" value="1"/>
</dbReference>
<dbReference type="Pfam" id="PF00074">
    <property type="entry name" value="RnaseA"/>
    <property type="match status" value="1"/>
</dbReference>
<dbReference type="SMART" id="SM00092">
    <property type="entry name" value="RNAse_Pc"/>
    <property type="match status" value="1"/>
</dbReference>
<dbReference type="SUPFAM" id="SSF54076">
    <property type="entry name" value="RNase A-like"/>
    <property type="match status" value="1"/>
</dbReference>
<proteinExistence type="inferred from homology"/>
<comment type="function">
    <text evidence="1">Does not exhibit any ribonuclease activity.</text>
</comment>
<comment type="subcellular location">
    <subcellularLocation>
        <location evidence="3">Secreted</location>
    </subcellularLocation>
</comment>
<comment type="similarity">
    <text evidence="3">Belongs to the pancreatic ribonuclease family.</text>
</comment>
<organism>
    <name type="scientific">Cebus albifrons</name>
    <name type="common">White-fronted capuchin</name>
    <dbReference type="NCBI Taxonomy" id="9514"/>
    <lineage>
        <taxon>Eukaryota</taxon>
        <taxon>Metazoa</taxon>
        <taxon>Chordata</taxon>
        <taxon>Craniata</taxon>
        <taxon>Vertebrata</taxon>
        <taxon>Euteleostomi</taxon>
        <taxon>Mammalia</taxon>
        <taxon>Eutheria</taxon>
        <taxon>Euarchontoglires</taxon>
        <taxon>Primates</taxon>
        <taxon>Haplorrhini</taxon>
        <taxon>Platyrrhini</taxon>
        <taxon>Cebidae</taxon>
        <taxon>Cebinae</taxon>
        <taxon>Cebus</taxon>
    </lineage>
</organism>